<name>RRP36_BOVIN</name>
<evidence type="ECO:0000250" key="1"/>
<evidence type="ECO:0000250" key="2">
    <source>
        <dbReference type="UniProtKB" id="Q3UFY0"/>
    </source>
</evidence>
<evidence type="ECO:0000250" key="3">
    <source>
        <dbReference type="UniProtKB" id="Q96EU6"/>
    </source>
</evidence>
<evidence type="ECO:0000255" key="4"/>
<evidence type="ECO:0000256" key="5">
    <source>
        <dbReference type="SAM" id="MobiDB-lite"/>
    </source>
</evidence>
<evidence type="ECO:0000305" key="6"/>
<dbReference type="EMBL" id="BC148959">
    <property type="protein sequence ID" value="AAI48960.1"/>
    <property type="molecule type" value="mRNA"/>
</dbReference>
<dbReference type="RefSeq" id="NP_001098949.1">
    <property type="nucleotide sequence ID" value="NM_001105479.1"/>
</dbReference>
<dbReference type="SMR" id="A6QNR1"/>
<dbReference type="FunCoup" id="A6QNR1">
    <property type="interactions" value="4139"/>
</dbReference>
<dbReference type="STRING" id="9913.ENSBTAP00000044278"/>
<dbReference type="GeneID" id="100125879"/>
<dbReference type="KEGG" id="bta:100125879"/>
<dbReference type="CTD" id="88745"/>
<dbReference type="VEuPathDB" id="HostDB:ENSBTAG00000053873"/>
<dbReference type="HOGENOM" id="CLU_048802_4_0_1"/>
<dbReference type="InParanoid" id="A6QNR1"/>
<dbReference type="OMA" id="CRNVEQK"/>
<dbReference type="OrthoDB" id="448446at2759"/>
<dbReference type="Reactome" id="R-BTA-6791226">
    <property type="pathway name" value="Major pathway of rRNA processing in the nucleolus and cytosol"/>
</dbReference>
<dbReference type="Proteomes" id="UP000009136">
    <property type="component" value="Chromosome 23"/>
</dbReference>
<dbReference type="Bgee" id="ENSBTAG00000053873">
    <property type="expression patterns" value="Expressed in ruminant reticulum and 108 other cell types or tissues"/>
</dbReference>
<dbReference type="GO" id="GO:0030686">
    <property type="term" value="C:90S preribosome"/>
    <property type="evidence" value="ECO:0000318"/>
    <property type="project" value="GO_Central"/>
</dbReference>
<dbReference type="GO" id="GO:0005730">
    <property type="term" value="C:nucleolus"/>
    <property type="evidence" value="ECO:0000250"/>
    <property type="project" value="UniProtKB"/>
</dbReference>
<dbReference type="GO" id="GO:0000462">
    <property type="term" value="P:maturation of SSU-rRNA from tricistronic rRNA transcript (SSU-rRNA, 5.8S rRNA, LSU-rRNA)"/>
    <property type="evidence" value="ECO:0000318"/>
    <property type="project" value="GO_Central"/>
</dbReference>
<dbReference type="GO" id="GO:0042274">
    <property type="term" value="P:ribosomal small subunit biogenesis"/>
    <property type="evidence" value="ECO:0000250"/>
    <property type="project" value="UniProtKB"/>
</dbReference>
<dbReference type="GO" id="GO:0006364">
    <property type="term" value="P:rRNA processing"/>
    <property type="evidence" value="ECO:0000250"/>
    <property type="project" value="UniProtKB"/>
</dbReference>
<dbReference type="InterPro" id="IPR009292">
    <property type="entry name" value="RRP36"/>
</dbReference>
<dbReference type="PANTHER" id="PTHR21738">
    <property type="entry name" value="RIBOSOMAL RNA PROCESSING PROTEIN 36 HOMOLOG"/>
    <property type="match status" value="1"/>
</dbReference>
<dbReference type="PANTHER" id="PTHR21738:SF0">
    <property type="entry name" value="RIBOSOMAL RNA PROCESSING PROTEIN 36 HOMOLOG"/>
    <property type="match status" value="1"/>
</dbReference>
<dbReference type="Pfam" id="PF06102">
    <property type="entry name" value="RRP36"/>
    <property type="match status" value="1"/>
</dbReference>
<reference key="1">
    <citation type="submission" date="2007-07" db="EMBL/GenBank/DDBJ databases">
        <authorList>
            <consortium name="NIH - Mammalian Gene Collection (MGC) project"/>
        </authorList>
    </citation>
    <scope>NUCLEOTIDE SEQUENCE [LARGE SCALE MRNA]</scope>
    <source>
        <strain>Hereford</strain>
        <tissue>Thalamus</tissue>
    </source>
</reference>
<organism>
    <name type="scientific">Bos taurus</name>
    <name type="common">Bovine</name>
    <dbReference type="NCBI Taxonomy" id="9913"/>
    <lineage>
        <taxon>Eukaryota</taxon>
        <taxon>Metazoa</taxon>
        <taxon>Chordata</taxon>
        <taxon>Craniata</taxon>
        <taxon>Vertebrata</taxon>
        <taxon>Euteleostomi</taxon>
        <taxon>Mammalia</taxon>
        <taxon>Eutheria</taxon>
        <taxon>Laurasiatheria</taxon>
        <taxon>Artiodactyla</taxon>
        <taxon>Ruminantia</taxon>
        <taxon>Pecora</taxon>
        <taxon>Bovidae</taxon>
        <taxon>Bovinae</taxon>
        <taxon>Bos</taxon>
    </lineage>
</organism>
<feature type="chain" id="PRO_0000338396" description="Ribosomal RNA processing protein 36 homolog">
    <location>
        <begin position="1"/>
        <end position="246"/>
    </location>
</feature>
<feature type="region of interest" description="Disordered" evidence="5">
    <location>
        <begin position="1"/>
        <end position="35"/>
    </location>
</feature>
<feature type="region of interest" description="Disordered" evidence="5">
    <location>
        <begin position="57"/>
        <end position="78"/>
    </location>
</feature>
<feature type="region of interest" description="Disordered" evidence="5">
    <location>
        <begin position="222"/>
        <end position="246"/>
    </location>
</feature>
<feature type="coiled-coil region" evidence="4">
    <location>
        <begin position="144"/>
        <end position="192"/>
    </location>
</feature>
<feature type="short sequence motif" description="Nuclear localization signal" evidence="4">
    <location>
        <begin position="228"/>
        <end position="231"/>
    </location>
</feature>
<feature type="compositionally biased region" description="Polar residues" evidence="5">
    <location>
        <begin position="57"/>
        <end position="68"/>
    </location>
</feature>
<feature type="compositionally biased region" description="Basic residues" evidence="5">
    <location>
        <begin position="227"/>
        <end position="246"/>
    </location>
</feature>
<feature type="modified residue" description="Phosphoserine" evidence="3">
    <location>
        <position position="60"/>
    </location>
</feature>
<feature type="modified residue" description="Phosphoserine" evidence="2">
    <location>
        <position position="65"/>
    </location>
</feature>
<accession>A6QNR1</accession>
<sequence length="246" mass="28574">MRRASSCGGAVAGSPSEAQDGGEDDGSLRNDTSHMSFEELLELQSQVGTKAYKQLVTGSSTKKQSSRPPVQKGCVADKHRPLEMSAKVRVPFLRQVVPISKKVARDPRFDDLSGEYNPEVFDKTYQFLDDIRAREKELVKKQLKKHRSGEEHEKLQHLLQRMEQQEMAQKERKRQQELRLALKQERRAQAQQGHRPYFLKKSEQRQLVLAEKFKELKRSKKLESFLSRKRRRNAGKDRRHLPLSKE</sequence>
<gene>
    <name type="primary">RRP36</name>
</gene>
<proteinExistence type="evidence at transcript level"/>
<comment type="function">
    <text evidence="1">Involved in the early processing steps of the pre-rRNA in the maturation pathway leading to the 18S rRNA.</text>
</comment>
<comment type="subcellular location">
    <subcellularLocation>
        <location evidence="1">Nucleus</location>
        <location evidence="1">Nucleolus</location>
    </subcellularLocation>
</comment>
<comment type="similarity">
    <text evidence="6">Belongs to the RRP36 family.</text>
</comment>
<keyword id="KW-0175">Coiled coil</keyword>
<keyword id="KW-0539">Nucleus</keyword>
<keyword id="KW-0597">Phosphoprotein</keyword>
<keyword id="KW-1185">Reference proteome</keyword>
<keyword id="KW-0690">Ribosome biogenesis</keyword>
<keyword id="KW-0698">rRNA processing</keyword>
<protein>
    <recommendedName>
        <fullName>Ribosomal RNA processing protein 36 homolog</fullName>
    </recommendedName>
</protein>